<organism>
    <name type="scientific">Aliivibrio fischeri (strain ATCC 700601 / ES114)</name>
    <name type="common">Vibrio fischeri</name>
    <dbReference type="NCBI Taxonomy" id="312309"/>
    <lineage>
        <taxon>Bacteria</taxon>
        <taxon>Pseudomonadati</taxon>
        <taxon>Pseudomonadota</taxon>
        <taxon>Gammaproteobacteria</taxon>
        <taxon>Vibrionales</taxon>
        <taxon>Vibrionaceae</taxon>
        <taxon>Aliivibrio</taxon>
    </lineage>
</organism>
<protein>
    <recommendedName>
        <fullName evidence="1">Large ribosomal subunit protein bL25</fullName>
    </recommendedName>
    <alternativeName>
        <fullName evidence="2">50S ribosomal protein L25</fullName>
    </alternativeName>
</protein>
<proteinExistence type="inferred from homology"/>
<dbReference type="EMBL" id="CP000020">
    <property type="protein sequence ID" value="AAW85357.1"/>
    <property type="molecule type" value="Genomic_DNA"/>
</dbReference>
<dbReference type="RefSeq" id="WP_011261530.1">
    <property type="nucleotide sequence ID" value="NC_006840.2"/>
</dbReference>
<dbReference type="RefSeq" id="YP_204245.1">
    <property type="nucleotide sequence ID" value="NC_006840.2"/>
</dbReference>
<dbReference type="SMR" id="Q5E6I9"/>
<dbReference type="STRING" id="312309.VF_0862"/>
<dbReference type="EnsemblBacteria" id="AAW85357">
    <property type="protein sequence ID" value="AAW85357"/>
    <property type="gene ID" value="VF_0862"/>
</dbReference>
<dbReference type="GeneID" id="54163530"/>
<dbReference type="KEGG" id="vfi:VF_0862"/>
<dbReference type="PATRIC" id="fig|312309.11.peg.856"/>
<dbReference type="eggNOG" id="COG1825">
    <property type="taxonomic scope" value="Bacteria"/>
</dbReference>
<dbReference type="HOGENOM" id="CLU_137946_0_0_6"/>
<dbReference type="OrthoDB" id="9806411at2"/>
<dbReference type="Proteomes" id="UP000000537">
    <property type="component" value="Chromosome I"/>
</dbReference>
<dbReference type="GO" id="GO:0022625">
    <property type="term" value="C:cytosolic large ribosomal subunit"/>
    <property type="evidence" value="ECO:0007669"/>
    <property type="project" value="TreeGrafter"/>
</dbReference>
<dbReference type="GO" id="GO:0008097">
    <property type="term" value="F:5S rRNA binding"/>
    <property type="evidence" value="ECO:0007669"/>
    <property type="project" value="InterPro"/>
</dbReference>
<dbReference type="GO" id="GO:0003735">
    <property type="term" value="F:structural constituent of ribosome"/>
    <property type="evidence" value="ECO:0007669"/>
    <property type="project" value="InterPro"/>
</dbReference>
<dbReference type="GO" id="GO:0006412">
    <property type="term" value="P:translation"/>
    <property type="evidence" value="ECO:0007669"/>
    <property type="project" value="UniProtKB-UniRule"/>
</dbReference>
<dbReference type="CDD" id="cd00495">
    <property type="entry name" value="Ribosomal_L25_TL5_CTC"/>
    <property type="match status" value="1"/>
</dbReference>
<dbReference type="FunFam" id="2.40.240.10:FF:000002">
    <property type="entry name" value="50S ribosomal protein L25"/>
    <property type="match status" value="1"/>
</dbReference>
<dbReference type="Gene3D" id="2.40.240.10">
    <property type="entry name" value="Ribosomal Protein L25, Chain P"/>
    <property type="match status" value="1"/>
</dbReference>
<dbReference type="HAMAP" id="MF_01336">
    <property type="entry name" value="Ribosomal_bL25"/>
    <property type="match status" value="1"/>
</dbReference>
<dbReference type="InterPro" id="IPR020056">
    <property type="entry name" value="Rbsml_bL25/Gln-tRNA_synth_N"/>
</dbReference>
<dbReference type="InterPro" id="IPR011035">
    <property type="entry name" value="Ribosomal_bL25/Gln-tRNA_synth"/>
</dbReference>
<dbReference type="InterPro" id="IPR020055">
    <property type="entry name" value="Ribosomal_bL25_short"/>
</dbReference>
<dbReference type="InterPro" id="IPR029751">
    <property type="entry name" value="Ribosomal_L25_dom"/>
</dbReference>
<dbReference type="InterPro" id="IPR020930">
    <property type="entry name" value="Ribosomal_uL5_bac-type"/>
</dbReference>
<dbReference type="NCBIfam" id="NF004612">
    <property type="entry name" value="PRK05943.1"/>
    <property type="match status" value="1"/>
</dbReference>
<dbReference type="PANTHER" id="PTHR33284">
    <property type="entry name" value="RIBOSOMAL PROTEIN L25/GLN-TRNA SYNTHETASE, ANTI-CODON-BINDING DOMAIN-CONTAINING PROTEIN"/>
    <property type="match status" value="1"/>
</dbReference>
<dbReference type="PANTHER" id="PTHR33284:SF1">
    <property type="entry name" value="RIBOSOMAL PROTEIN L25_GLN-TRNA SYNTHETASE, ANTI-CODON-BINDING DOMAIN-CONTAINING PROTEIN"/>
    <property type="match status" value="1"/>
</dbReference>
<dbReference type="Pfam" id="PF01386">
    <property type="entry name" value="Ribosomal_L25p"/>
    <property type="match status" value="1"/>
</dbReference>
<dbReference type="SUPFAM" id="SSF50715">
    <property type="entry name" value="Ribosomal protein L25-like"/>
    <property type="match status" value="1"/>
</dbReference>
<sequence>MKFEAVVRTEQGKGASRRLRHAGKFPAIVYGGTEAPVSIALDHDAVINQMDKPAFYEAIELVIDGAAVKVKPQDVQRHAFKPKVEHMDFIRI</sequence>
<comment type="function">
    <text evidence="1">This is one of the proteins that binds to the 5S RNA in the ribosome where it forms part of the central protuberance.</text>
</comment>
<comment type="subunit">
    <text evidence="1">Part of the 50S ribosomal subunit; part of the 5S rRNA/L5/L18/L25 subcomplex. Contacts the 5S rRNA. Binds to the 5S rRNA independently of L5 and L18.</text>
</comment>
<comment type="similarity">
    <text evidence="1">Belongs to the bacterial ribosomal protein bL25 family.</text>
</comment>
<keyword id="KW-1185">Reference proteome</keyword>
<keyword id="KW-0687">Ribonucleoprotein</keyword>
<keyword id="KW-0689">Ribosomal protein</keyword>
<keyword id="KW-0694">RNA-binding</keyword>
<keyword id="KW-0699">rRNA-binding</keyword>
<feature type="chain" id="PRO_0000181499" description="Large ribosomal subunit protein bL25">
    <location>
        <begin position="1"/>
        <end position="92"/>
    </location>
</feature>
<gene>
    <name evidence="1" type="primary">rplY</name>
    <name type="ordered locus">VF_0862</name>
</gene>
<evidence type="ECO:0000255" key="1">
    <source>
        <dbReference type="HAMAP-Rule" id="MF_01336"/>
    </source>
</evidence>
<evidence type="ECO:0000305" key="2"/>
<name>RL25_ALIF1</name>
<accession>Q5E6I9</accession>
<reference key="1">
    <citation type="journal article" date="2005" name="Proc. Natl. Acad. Sci. U.S.A.">
        <title>Complete genome sequence of Vibrio fischeri: a symbiotic bacterium with pathogenic congeners.</title>
        <authorList>
            <person name="Ruby E.G."/>
            <person name="Urbanowski M."/>
            <person name="Campbell J."/>
            <person name="Dunn A."/>
            <person name="Faini M."/>
            <person name="Gunsalus R."/>
            <person name="Lostroh P."/>
            <person name="Lupp C."/>
            <person name="McCann J."/>
            <person name="Millikan D."/>
            <person name="Schaefer A."/>
            <person name="Stabb E."/>
            <person name="Stevens A."/>
            <person name="Visick K."/>
            <person name="Whistler C."/>
            <person name="Greenberg E.P."/>
        </authorList>
    </citation>
    <scope>NUCLEOTIDE SEQUENCE [LARGE SCALE GENOMIC DNA]</scope>
    <source>
        <strain>ATCC 700601 / ES114</strain>
    </source>
</reference>